<comment type="function">
    <text evidence="1">Essential for recycling GMP and indirectly, cGMP.</text>
</comment>
<comment type="catalytic activity">
    <reaction evidence="1">
        <text>GMP + ATP = GDP + ADP</text>
        <dbReference type="Rhea" id="RHEA:20780"/>
        <dbReference type="ChEBI" id="CHEBI:30616"/>
        <dbReference type="ChEBI" id="CHEBI:58115"/>
        <dbReference type="ChEBI" id="CHEBI:58189"/>
        <dbReference type="ChEBI" id="CHEBI:456216"/>
        <dbReference type="EC" id="2.7.4.8"/>
    </reaction>
</comment>
<comment type="subcellular location">
    <subcellularLocation>
        <location evidence="1">Cytoplasm</location>
    </subcellularLocation>
</comment>
<comment type="similarity">
    <text evidence="1">Belongs to the guanylate kinase family.</text>
</comment>
<gene>
    <name evidence="1" type="primary">gmk</name>
    <name type="ordered locus">DP2860</name>
</gene>
<sequence length="203" mass="22414">MNKGKLFVISAPSGAGKTTILGRVMANVGRLNFSISHTTRTARPGEQDGVDYHFVEQEDFIEMQEKGIFLESAYVHKNYYGTSREAVMAQLSEGVDVVLDIDVQGATILMESASLPATYIFIAPPDLSVLEERLRKRGSDSEETIKLRMGNAAGEMLSSRKYDYLIVNDDLAQASTLLKSIIWAERAKSRRTPAGLPIKLVVE</sequence>
<protein>
    <recommendedName>
        <fullName evidence="1">Guanylate kinase</fullName>
        <ecNumber evidence="1">2.7.4.8</ecNumber>
    </recommendedName>
    <alternativeName>
        <fullName evidence="1">GMP kinase</fullName>
    </alternativeName>
</protein>
<keyword id="KW-0067">ATP-binding</keyword>
<keyword id="KW-0963">Cytoplasm</keyword>
<keyword id="KW-0418">Kinase</keyword>
<keyword id="KW-0547">Nucleotide-binding</keyword>
<keyword id="KW-1185">Reference proteome</keyword>
<keyword id="KW-0808">Transferase</keyword>
<reference key="1">
    <citation type="journal article" date="2004" name="Environ. Microbiol.">
        <title>The genome of Desulfotalea psychrophila, a sulfate-reducing bacterium from permanently cold Arctic sediments.</title>
        <authorList>
            <person name="Rabus R."/>
            <person name="Ruepp A."/>
            <person name="Frickey T."/>
            <person name="Rattei T."/>
            <person name="Fartmann B."/>
            <person name="Stark M."/>
            <person name="Bauer M."/>
            <person name="Zibat A."/>
            <person name="Lombardot T."/>
            <person name="Becker I."/>
            <person name="Amann J."/>
            <person name="Gellner K."/>
            <person name="Teeling H."/>
            <person name="Leuschner W.D."/>
            <person name="Gloeckner F.-O."/>
            <person name="Lupas A.N."/>
            <person name="Amann R."/>
            <person name="Klenk H.-P."/>
        </authorList>
    </citation>
    <scope>NUCLEOTIDE SEQUENCE [LARGE SCALE GENOMIC DNA]</scope>
    <source>
        <strain>DSM 12343 / LSv54</strain>
    </source>
</reference>
<accession>Q6AJ91</accession>
<dbReference type="EC" id="2.7.4.8" evidence="1"/>
<dbReference type="EMBL" id="CR522870">
    <property type="protein sequence ID" value="CAG37589.1"/>
    <property type="molecule type" value="Genomic_DNA"/>
</dbReference>
<dbReference type="RefSeq" id="WP_011190101.1">
    <property type="nucleotide sequence ID" value="NC_006138.1"/>
</dbReference>
<dbReference type="SMR" id="Q6AJ91"/>
<dbReference type="STRING" id="177439.DP2860"/>
<dbReference type="KEGG" id="dps:DP2860"/>
<dbReference type="eggNOG" id="COG0194">
    <property type="taxonomic scope" value="Bacteria"/>
</dbReference>
<dbReference type="HOGENOM" id="CLU_001715_1_2_7"/>
<dbReference type="OrthoDB" id="9808150at2"/>
<dbReference type="Proteomes" id="UP000000602">
    <property type="component" value="Chromosome"/>
</dbReference>
<dbReference type="GO" id="GO:0005829">
    <property type="term" value="C:cytosol"/>
    <property type="evidence" value="ECO:0007669"/>
    <property type="project" value="TreeGrafter"/>
</dbReference>
<dbReference type="GO" id="GO:0005524">
    <property type="term" value="F:ATP binding"/>
    <property type="evidence" value="ECO:0007669"/>
    <property type="project" value="UniProtKB-UniRule"/>
</dbReference>
<dbReference type="GO" id="GO:0004385">
    <property type="term" value="F:guanylate kinase activity"/>
    <property type="evidence" value="ECO:0007669"/>
    <property type="project" value="UniProtKB-UniRule"/>
</dbReference>
<dbReference type="CDD" id="cd00071">
    <property type="entry name" value="GMPK"/>
    <property type="match status" value="1"/>
</dbReference>
<dbReference type="FunFam" id="3.30.63.10:FF:000002">
    <property type="entry name" value="Guanylate kinase 1"/>
    <property type="match status" value="1"/>
</dbReference>
<dbReference type="Gene3D" id="3.30.63.10">
    <property type="entry name" value="Guanylate Kinase phosphate binding domain"/>
    <property type="match status" value="1"/>
</dbReference>
<dbReference type="Gene3D" id="3.40.50.300">
    <property type="entry name" value="P-loop containing nucleotide triphosphate hydrolases"/>
    <property type="match status" value="1"/>
</dbReference>
<dbReference type="HAMAP" id="MF_00328">
    <property type="entry name" value="Guanylate_kinase"/>
    <property type="match status" value="1"/>
</dbReference>
<dbReference type="InterPro" id="IPR008145">
    <property type="entry name" value="GK/Ca_channel_bsu"/>
</dbReference>
<dbReference type="InterPro" id="IPR008144">
    <property type="entry name" value="Guanylate_kin-like_dom"/>
</dbReference>
<dbReference type="InterPro" id="IPR017665">
    <property type="entry name" value="Guanylate_kinase"/>
</dbReference>
<dbReference type="InterPro" id="IPR020590">
    <property type="entry name" value="Guanylate_kinase_CS"/>
</dbReference>
<dbReference type="InterPro" id="IPR027417">
    <property type="entry name" value="P-loop_NTPase"/>
</dbReference>
<dbReference type="NCBIfam" id="TIGR03263">
    <property type="entry name" value="guanyl_kin"/>
    <property type="match status" value="1"/>
</dbReference>
<dbReference type="PANTHER" id="PTHR23117:SF13">
    <property type="entry name" value="GUANYLATE KINASE"/>
    <property type="match status" value="1"/>
</dbReference>
<dbReference type="PANTHER" id="PTHR23117">
    <property type="entry name" value="GUANYLATE KINASE-RELATED"/>
    <property type="match status" value="1"/>
</dbReference>
<dbReference type="Pfam" id="PF00625">
    <property type="entry name" value="Guanylate_kin"/>
    <property type="match status" value="1"/>
</dbReference>
<dbReference type="SMART" id="SM00072">
    <property type="entry name" value="GuKc"/>
    <property type="match status" value="1"/>
</dbReference>
<dbReference type="SUPFAM" id="SSF52540">
    <property type="entry name" value="P-loop containing nucleoside triphosphate hydrolases"/>
    <property type="match status" value="1"/>
</dbReference>
<dbReference type="PROSITE" id="PS00856">
    <property type="entry name" value="GUANYLATE_KINASE_1"/>
    <property type="match status" value="1"/>
</dbReference>
<dbReference type="PROSITE" id="PS50052">
    <property type="entry name" value="GUANYLATE_KINASE_2"/>
    <property type="match status" value="1"/>
</dbReference>
<feature type="chain" id="PRO_0000170532" description="Guanylate kinase">
    <location>
        <begin position="1"/>
        <end position="203"/>
    </location>
</feature>
<feature type="domain" description="Guanylate kinase-like" evidence="1">
    <location>
        <begin position="4"/>
        <end position="183"/>
    </location>
</feature>
<feature type="binding site" evidence="1">
    <location>
        <begin position="11"/>
        <end position="18"/>
    </location>
    <ligand>
        <name>ATP</name>
        <dbReference type="ChEBI" id="CHEBI:30616"/>
    </ligand>
</feature>
<name>KGUA_DESPS</name>
<evidence type="ECO:0000255" key="1">
    <source>
        <dbReference type="HAMAP-Rule" id="MF_00328"/>
    </source>
</evidence>
<proteinExistence type="inferred from homology"/>
<organism>
    <name type="scientific">Desulfotalea psychrophila (strain LSv54 / DSM 12343)</name>
    <dbReference type="NCBI Taxonomy" id="177439"/>
    <lineage>
        <taxon>Bacteria</taxon>
        <taxon>Pseudomonadati</taxon>
        <taxon>Thermodesulfobacteriota</taxon>
        <taxon>Desulfobulbia</taxon>
        <taxon>Desulfobulbales</taxon>
        <taxon>Desulfocapsaceae</taxon>
        <taxon>Desulfotalea</taxon>
    </lineage>
</organism>